<feature type="chain" id="PRO_0000448891" description="25S rRNA (cytosine-C(5))-methyltransferase NOP2A">
    <location>
        <begin position="1"/>
        <end position="682"/>
    </location>
</feature>
<feature type="region of interest" description="Disordered" evidence="4">
    <location>
        <begin position="1"/>
        <end position="155"/>
    </location>
</feature>
<feature type="region of interest" description="Disordered" evidence="4">
    <location>
        <begin position="567"/>
        <end position="682"/>
    </location>
</feature>
<feature type="short sequence motif" description="Nuclear localization signal 1" evidence="2">
    <location>
        <begin position="38"/>
        <end position="45"/>
    </location>
</feature>
<feature type="short sequence motif" description="Nuclear localization signal 2" evidence="2">
    <location>
        <begin position="616"/>
        <end position="623"/>
    </location>
</feature>
<feature type="short sequence motif" description="Nuclear localization signal 3" evidence="2">
    <location>
        <begin position="635"/>
        <end position="642"/>
    </location>
</feature>
<feature type="short sequence motif" description="Nuclear localization signal 4" evidence="2">
    <location>
        <begin position="655"/>
        <end position="662"/>
    </location>
</feature>
<feature type="compositionally biased region" description="Basic residues" evidence="4">
    <location>
        <begin position="1"/>
        <end position="12"/>
    </location>
</feature>
<feature type="compositionally biased region" description="Polar residues" evidence="4">
    <location>
        <begin position="14"/>
        <end position="37"/>
    </location>
</feature>
<feature type="compositionally biased region" description="Acidic residues" evidence="4">
    <location>
        <begin position="58"/>
        <end position="103"/>
    </location>
</feature>
<feature type="compositionally biased region" description="Acidic residues" evidence="4">
    <location>
        <begin position="111"/>
        <end position="151"/>
    </location>
</feature>
<feature type="compositionally biased region" description="Acidic residues" evidence="4">
    <location>
        <begin position="588"/>
        <end position="599"/>
    </location>
</feature>
<feature type="compositionally biased region" description="Basic and acidic residues" evidence="4">
    <location>
        <begin position="610"/>
        <end position="648"/>
    </location>
</feature>
<feature type="compositionally biased region" description="Basic residues" evidence="4">
    <location>
        <begin position="649"/>
        <end position="658"/>
    </location>
</feature>
<feature type="compositionally biased region" description="Basic and acidic residues" evidence="4">
    <location>
        <begin position="659"/>
        <end position="682"/>
    </location>
</feature>
<feature type="active site" description="Nucleophile" evidence="3">
    <location>
        <position position="494"/>
    </location>
</feature>
<feature type="binding site" evidence="3">
    <location>
        <begin position="367"/>
        <end position="373"/>
    </location>
    <ligand>
        <name>S-adenosyl-L-methionine</name>
        <dbReference type="ChEBI" id="CHEBI:59789"/>
    </ligand>
</feature>
<feature type="binding site" evidence="3">
    <location>
        <position position="391"/>
    </location>
    <ligand>
        <name>S-adenosyl-L-methionine</name>
        <dbReference type="ChEBI" id="CHEBI:59789"/>
    </ligand>
</feature>
<feature type="binding site" evidence="3">
    <location>
        <position position="418"/>
    </location>
    <ligand>
        <name>S-adenosyl-L-methionine</name>
        <dbReference type="ChEBI" id="CHEBI:59789"/>
    </ligand>
</feature>
<feature type="binding site" evidence="3">
    <location>
        <position position="437"/>
    </location>
    <ligand>
        <name>S-adenosyl-L-methionine</name>
        <dbReference type="ChEBI" id="CHEBI:59789"/>
    </ligand>
</feature>
<feature type="sequence conflict" description="In Ref. 4; AAM67083." evidence="11" ref="4">
    <original>R</original>
    <variation>W</variation>
    <location>
        <position position="657"/>
    </location>
</feature>
<sequence length="682" mass="76776">MPALTRNKKKAATKSITPPTKQLTKSKTPPMKPQTSMLKKGAKSQNKPPLKKQKKEVVEEEPLEDYEVTDDSDEDDEVSDGSDEDDISPAVESEEIDESDDGENGSNQLFSDDEEENDEETLGDDFLEGSGDEDEEGSLDADSDADSDDDDIVAKSDAIDRDLAMQKKDAAAELEDFIKQDDVHDEEPEHDAFRLPTEEELEEEARGPPDLPLLKTRIEEIVRALKNFKAFRPKDTTRKACVEQLKADLGSYYGYNSFLIGTLVEMFPPGELMELIEAFEKQRPTSIRTNTLKTRRRDLADVLLNRGVNLDPLSKWSKVGLVIYDSQVPIGATPEYLAGYYMLQGASSFLPVMALAPRENERIVDVAAAPGGKTTYIAALMKNTGLIYANEMKVPRLKSLTANLHRMGVTNTIVCNYDGRELPKVLGQNTVDRVLLDAPCSGTGIISKDESVKITKTMDEIKKFAHLQKQLLLAAIDMVDANSKTGGYIVYSTCSIMVTENEAVIDYALKKRDVKLVTCGLDFGRKGFTRFREHRFQPSLDKTRRFYPHVHNMDGFFVAKLKKMSNVKQSSEEGDDDAVETVEQAEVSSDDDDEAEAIEETEKPSVPVRQPKERKEKKNKEKLAKSKEDKRGKKDKKSKSENVEEPSKPRKQKKKRREWKNEIAQAREEKRIAMREKAKEEK</sequence>
<gene>
    <name evidence="9" type="primary">NOP2A</name>
    <name evidence="8" type="synonym">OLI2</name>
    <name evidence="10" type="synonym">TRM4c</name>
    <name evidence="12" type="ordered locus">At5g55920</name>
    <name evidence="13" type="ORF">MYN21.3</name>
</gene>
<protein>
    <recommendedName>
        <fullName evidence="11">25S rRNA (cytosine-C(5))-methyltransferase NOP2A</fullName>
        <ecNumber evidence="3 6">2.1.1.-</ecNumber>
    </recommendedName>
    <alternativeName>
        <fullName evidence="9">Nucleolar protein 2A</fullName>
    </alternativeName>
    <alternativeName>
        <fullName evidence="8">Protein OLIGOCELLULA 2</fullName>
    </alternativeName>
    <alternativeName>
        <fullName evidence="10">tRNA methyltransferase 4c</fullName>
        <shortName evidence="10">AtTRM4c</shortName>
    </alternativeName>
</protein>
<accession>Q9FG73</accession>
<accession>B9DFH3</accession>
<accession>Q8L8W4</accession>
<dbReference type="EC" id="2.1.1.-" evidence="3 6"/>
<dbReference type="EMBL" id="AB026659">
    <property type="protein sequence ID" value="BAB08657.1"/>
    <property type="molecule type" value="Genomic_DNA"/>
</dbReference>
<dbReference type="EMBL" id="CP002688">
    <property type="protein sequence ID" value="AED96699.1"/>
    <property type="molecule type" value="Genomic_DNA"/>
</dbReference>
<dbReference type="EMBL" id="AK316770">
    <property type="protein sequence ID" value="BAH19490.1"/>
    <property type="molecule type" value="mRNA"/>
</dbReference>
<dbReference type="EMBL" id="AY088769">
    <property type="protein sequence ID" value="AAM67083.1"/>
    <property type="status" value="ALT_INIT"/>
    <property type="molecule type" value="mRNA"/>
</dbReference>
<dbReference type="RefSeq" id="NP_850927.1">
    <property type="nucleotide sequence ID" value="NM_180596.2"/>
</dbReference>
<dbReference type="SMR" id="Q9FG73"/>
<dbReference type="FunCoup" id="Q9FG73">
    <property type="interactions" value="3355"/>
</dbReference>
<dbReference type="IntAct" id="Q9FG73">
    <property type="interactions" value="3"/>
</dbReference>
<dbReference type="STRING" id="3702.Q9FG73"/>
<dbReference type="GlyGen" id="Q9FG73">
    <property type="glycosylation" value="1 site"/>
</dbReference>
<dbReference type="iPTMnet" id="Q9FG73"/>
<dbReference type="PaxDb" id="3702-AT5G55920.1"/>
<dbReference type="ProteomicsDB" id="181142"/>
<dbReference type="EnsemblPlants" id="AT5G55920.1">
    <property type="protein sequence ID" value="AT5G55920.1"/>
    <property type="gene ID" value="AT5G55920"/>
</dbReference>
<dbReference type="GeneID" id="835690"/>
<dbReference type="Gramene" id="AT5G55920.1">
    <property type="protein sequence ID" value="AT5G55920.1"/>
    <property type="gene ID" value="AT5G55920"/>
</dbReference>
<dbReference type="KEGG" id="ath:AT5G55920"/>
<dbReference type="Araport" id="AT5G55920"/>
<dbReference type="TAIR" id="AT5G55920">
    <property type="gene designation" value="OLI2"/>
</dbReference>
<dbReference type="eggNOG" id="KOG1122">
    <property type="taxonomic scope" value="Eukaryota"/>
</dbReference>
<dbReference type="HOGENOM" id="CLU_005316_3_1_1"/>
<dbReference type="InParanoid" id="Q9FG73"/>
<dbReference type="OMA" id="FRNIMTG"/>
<dbReference type="PhylomeDB" id="Q9FG73"/>
<dbReference type="CD-CODE" id="4299E36E">
    <property type="entry name" value="Nucleolus"/>
</dbReference>
<dbReference type="PRO" id="PR:Q9FG73"/>
<dbReference type="Proteomes" id="UP000006548">
    <property type="component" value="Chromosome 5"/>
</dbReference>
<dbReference type="ExpressionAtlas" id="Q9FG73">
    <property type="expression patterns" value="baseline and differential"/>
</dbReference>
<dbReference type="GO" id="GO:0005730">
    <property type="term" value="C:nucleolus"/>
    <property type="evidence" value="ECO:0000314"/>
    <property type="project" value="UniProtKB"/>
</dbReference>
<dbReference type="GO" id="GO:0003723">
    <property type="term" value="F:RNA binding"/>
    <property type="evidence" value="ECO:0007669"/>
    <property type="project" value="UniProtKB-KW"/>
</dbReference>
<dbReference type="GO" id="GO:0008173">
    <property type="term" value="F:RNA methyltransferase activity"/>
    <property type="evidence" value="ECO:0007669"/>
    <property type="project" value="InterPro"/>
</dbReference>
<dbReference type="GO" id="GO:0008757">
    <property type="term" value="F:S-adenosylmethionine-dependent methyltransferase activity"/>
    <property type="evidence" value="ECO:0007669"/>
    <property type="project" value="InterPro"/>
</dbReference>
<dbReference type="GO" id="GO:0051301">
    <property type="term" value="P:cell division"/>
    <property type="evidence" value="ECO:0000315"/>
    <property type="project" value="TAIR"/>
</dbReference>
<dbReference type="GO" id="GO:0009965">
    <property type="term" value="P:leaf morphogenesis"/>
    <property type="evidence" value="ECO:0000315"/>
    <property type="project" value="TAIR"/>
</dbReference>
<dbReference type="GO" id="GO:0042127">
    <property type="term" value="P:regulation of cell population proliferation"/>
    <property type="evidence" value="ECO:0000315"/>
    <property type="project" value="UniProtKB"/>
</dbReference>
<dbReference type="GO" id="GO:0090069">
    <property type="term" value="P:regulation of ribosome biogenesis"/>
    <property type="evidence" value="ECO:0000315"/>
    <property type="project" value="UniProtKB"/>
</dbReference>
<dbReference type="GO" id="GO:0001510">
    <property type="term" value="P:RNA methylation"/>
    <property type="evidence" value="ECO:0007669"/>
    <property type="project" value="InterPro"/>
</dbReference>
<dbReference type="GO" id="GO:0010015">
    <property type="term" value="P:root morphogenesis"/>
    <property type="evidence" value="ECO:0000315"/>
    <property type="project" value="TAIR"/>
</dbReference>
<dbReference type="GO" id="GO:0006364">
    <property type="term" value="P:rRNA processing"/>
    <property type="evidence" value="ECO:0007669"/>
    <property type="project" value="UniProtKB-KW"/>
</dbReference>
<dbReference type="FunFam" id="3.30.70.1170:FF:000001">
    <property type="entry name" value="Ribosomal RNA methyltransferase Nop2"/>
    <property type="match status" value="1"/>
</dbReference>
<dbReference type="FunFam" id="3.40.50.150:FF:000666">
    <property type="entry name" value="S-adenosyl-L-methionine-dependent methyltransferases superfamily protein"/>
    <property type="match status" value="1"/>
</dbReference>
<dbReference type="Gene3D" id="3.30.70.1170">
    <property type="entry name" value="Sun protein, domain 3"/>
    <property type="match status" value="1"/>
</dbReference>
<dbReference type="Gene3D" id="3.40.50.150">
    <property type="entry name" value="Vaccinia Virus protein VP39"/>
    <property type="match status" value="1"/>
</dbReference>
<dbReference type="InterPro" id="IPR049560">
    <property type="entry name" value="MeTrfase_RsmB-F_NOP2_cat"/>
</dbReference>
<dbReference type="InterPro" id="IPR001678">
    <property type="entry name" value="MeTrfase_RsmB-F_NOP2_dom"/>
</dbReference>
<dbReference type="InterPro" id="IPR011023">
    <property type="entry name" value="Nop2p"/>
</dbReference>
<dbReference type="InterPro" id="IPR023267">
    <property type="entry name" value="RCMT"/>
</dbReference>
<dbReference type="InterPro" id="IPR023273">
    <property type="entry name" value="RCMT_NOP2"/>
</dbReference>
<dbReference type="InterPro" id="IPR018314">
    <property type="entry name" value="RsmB/NOL1/NOP2-like_CS"/>
</dbReference>
<dbReference type="InterPro" id="IPR029063">
    <property type="entry name" value="SAM-dependent_MTases_sf"/>
</dbReference>
<dbReference type="NCBIfam" id="TIGR00446">
    <property type="entry name" value="nop2p"/>
    <property type="match status" value="1"/>
</dbReference>
<dbReference type="PANTHER" id="PTHR22807:SF75">
    <property type="entry name" value="25S RRNA (CYTOSINE-C(5))-METHYLTRANSFERASE NOP2A"/>
    <property type="match status" value="1"/>
</dbReference>
<dbReference type="PANTHER" id="PTHR22807">
    <property type="entry name" value="NOP2 YEAST -RELATED NOL1/NOP2/FMU SUN DOMAIN-CONTAINING"/>
    <property type="match status" value="1"/>
</dbReference>
<dbReference type="Pfam" id="PF01189">
    <property type="entry name" value="Methyltr_RsmB-F"/>
    <property type="match status" value="1"/>
</dbReference>
<dbReference type="PRINTS" id="PR02008">
    <property type="entry name" value="RCMTFAMILY"/>
</dbReference>
<dbReference type="PRINTS" id="PR02012">
    <property type="entry name" value="RCMTNOP2"/>
</dbReference>
<dbReference type="SUPFAM" id="SSF53335">
    <property type="entry name" value="S-adenosyl-L-methionine-dependent methyltransferases"/>
    <property type="match status" value="1"/>
</dbReference>
<dbReference type="PROSITE" id="PS01153">
    <property type="entry name" value="NOL1_NOP2_SUN"/>
    <property type="match status" value="1"/>
</dbReference>
<dbReference type="PROSITE" id="PS51686">
    <property type="entry name" value="SAM_MT_RSMB_NOP"/>
    <property type="match status" value="1"/>
</dbReference>
<evidence type="ECO:0000250" key="1">
    <source>
        <dbReference type="UniProtKB" id="P46087"/>
    </source>
</evidence>
<evidence type="ECO:0000255" key="2">
    <source>
        <dbReference type="PROSITE-ProRule" id="PRU00768"/>
    </source>
</evidence>
<evidence type="ECO:0000255" key="3">
    <source>
        <dbReference type="PROSITE-ProRule" id="PRU01023"/>
    </source>
</evidence>
<evidence type="ECO:0000256" key="4">
    <source>
        <dbReference type="SAM" id="MobiDB-lite"/>
    </source>
</evidence>
<evidence type="ECO:0000269" key="5">
    <source>
    </source>
</evidence>
<evidence type="ECO:0000269" key="6">
    <source>
    </source>
</evidence>
<evidence type="ECO:0000269" key="7">
    <source>
    </source>
</evidence>
<evidence type="ECO:0000303" key="8">
    <source>
    </source>
</evidence>
<evidence type="ECO:0000303" key="9">
    <source>
    </source>
</evidence>
<evidence type="ECO:0000303" key="10">
    <source>
    </source>
</evidence>
<evidence type="ECO:0000305" key="11"/>
<evidence type="ECO:0000312" key="12">
    <source>
        <dbReference type="Araport" id="AT5G55920"/>
    </source>
</evidence>
<evidence type="ECO:0000312" key="13">
    <source>
        <dbReference type="EMBL" id="BAB08657.1"/>
    </source>
</evidence>
<comment type="function">
    <text evidence="1 5 6 7">Involved in ribosomal large subunit assembly, required for normal progression of rRNA processing (PubMed:26268215, PubMed:29375609). S-adenosyl-L-methionine-dependent methyltransferase that probably methylates the C(5) position of cytosine 2268 (m5C2268) in nuclear 25S rRNA (PubMed:26268215). May play a role in the regulation of the cell cycle and the increased nucleolar activity that is associated with the cell proliferation (By similarity). Seems involved in the regulation of cell proliferation in leaves (PubMed:19392710, PubMed:29375609).</text>
</comment>
<comment type="catalytic activity">
    <reaction evidence="6">
        <text>a cytidine in 25S rRNA + S-adenosyl-L-methionine = a 5-methylcytidine in 25S rRNA + S-adenosyl-L-homocysteine + H(+)</text>
        <dbReference type="Rhea" id="RHEA:47780"/>
        <dbReference type="Rhea" id="RHEA-COMP:11911"/>
        <dbReference type="Rhea" id="RHEA-COMP:11912"/>
        <dbReference type="ChEBI" id="CHEBI:15378"/>
        <dbReference type="ChEBI" id="CHEBI:57856"/>
        <dbReference type="ChEBI" id="CHEBI:59789"/>
        <dbReference type="ChEBI" id="CHEBI:74483"/>
        <dbReference type="ChEBI" id="CHEBI:82748"/>
    </reaction>
</comment>
<comment type="subcellular location">
    <subcellularLocation>
        <location evidence="2">Nucleus</location>
    </subcellularLocation>
    <subcellularLocation>
        <location evidence="7">Nucleus</location>
        <location evidence="7">Nucleolus</location>
    </subcellularLocation>
</comment>
<comment type="tissue specificity">
    <text evidence="7">Strongly expressed in tissues with high cell proliferation activity that have a high demand for ribosome production such as guard cells, leaves primordia, root apical meristems and the basal parts of lateral roots.</text>
</comment>
<comment type="disruption phenotype">
    <text evidence="5 6 7">Moderate reduction in leaf cell number associated with pointed leaves shape (PubMed:19392710). Defects in pre-rRNA processing characterized by an increased accumulation of rRNA intermediates containing 50-ETS, ITS1, or ITS2, with stronger negative effect on ITS2-containing intermediates (PubMed:29375609). Higher levels of 35S, 27SA, 27SB, P-A3, and 18SA3 rRNAs (PubMed:29375609). Normal levels of methylation at cytosine 2860 of 25S rRNA, but slight reduction of nuclear 25S rRNA cytosine 2268 (m5C2268) (PubMed:26268215). Double mutants oli2 oli7 and oli2 oli5 have further reduced cell number but exhibit also excessive postmitotic cell enlargement in leaves (compensation phenotype) (PubMed:19392710). Plant missing both OLI2 and GIF1/AN3 have a strong compensation phenotype (PubMed:19392710). The double mutant gdp1 oli2 exhibit strong growth defect due to a synergistically impaired cell proliferation in leaves and enlarged cells (PubMed:29375609).</text>
</comment>
<comment type="similarity">
    <text evidence="11">Belongs to the class I-like SAM-binding methyltransferase superfamily. RsmB/NOP family.</text>
</comment>
<comment type="sequence caution" evidence="11">
    <conflict type="erroneous initiation">
        <sequence resource="EMBL-CDS" id="AAM67083"/>
    </conflict>
    <text>Truncated N-terminus.</text>
</comment>
<proteinExistence type="evidence at protein level"/>
<name>NOP2A_ARATH</name>
<organism>
    <name type="scientific">Arabidopsis thaliana</name>
    <name type="common">Mouse-ear cress</name>
    <dbReference type="NCBI Taxonomy" id="3702"/>
    <lineage>
        <taxon>Eukaryota</taxon>
        <taxon>Viridiplantae</taxon>
        <taxon>Streptophyta</taxon>
        <taxon>Embryophyta</taxon>
        <taxon>Tracheophyta</taxon>
        <taxon>Spermatophyta</taxon>
        <taxon>Magnoliopsida</taxon>
        <taxon>eudicotyledons</taxon>
        <taxon>Gunneridae</taxon>
        <taxon>Pentapetalae</taxon>
        <taxon>rosids</taxon>
        <taxon>malvids</taxon>
        <taxon>Brassicales</taxon>
        <taxon>Brassicaceae</taxon>
        <taxon>Camelineae</taxon>
        <taxon>Arabidopsis</taxon>
    </lineage>
</organism>
<keyword id="KW-0489">Methyltransferase</keyword>
<keyword id="KW-0539">Nucleus</keyword>
<keyword id="KW-1185">Reference proteome</keyword>
<keyword id="KW-0690">Ribosome biogenesis</keyword>
<keyword id="KW-0694">RNA-binding</keyword>
<keyword id="KW-0698">rRNA processing</keyword>
<keyword id="KW-0949">S-adenosyl-L-methionine</keyword>
<keyword id="KW-0808">Transferase</keyword>
<reference key="1">
    <citation type="submission" date="1999-04" db="EMBL/GenBank/DDBJ databases">
        <title>Structural analysis of Arabidopsis thaliana chromosome 5. XI.</title>
        <authorList>
            <person name="Kaneko T."/>
            <person name="Katoh T."/>
            <person name="Asamizu E."/>
            <person name="Sato S."/>
            <person name="Nakamura Y."/>
            <person name="Kotani H."/>
            <person name="Tabata S."/>
        </authorList>
    </citation>
    <scope>NUCLEOTIDE SEQUENCE [LARGE SCALE GENOMIC DNA]</scope>
    <source>
        <strain>cv. Columbia</strain>
    </source>
</reference>
<reference key="2">
    <citation type="journal article" date="2017" name="Plant J.">
        <title>Araport11: a complete reannotation of the Arabidopsis thaliana reference genome.</title>
        <authorList>
            <person name="Cheng C.Y."/>
            <person name="Krishnakumar V."/>
            <person name="Chan A.P."/>
            <person name="Thibaud-Nissen F."/>
            <person name="Schobel S."/>
            <person name="Town C.D."/>
        </authorList>
    </citation>
    <scope>GENOME REANNOTATION</scope>
    <source>
        <strain>cv. Columbia</strain>
    </source>
</reference>
<reference key="3">
    <citation type="journal article" date="2009" name="DNA Res.">
        <title>Analysis of multiple occurrences of alternative splicing events in Arabidopsis thaliana using novel sequenced full-length cDNAs.</title>
        <authorList>
            <person name="Iida K."/>
            <person name="Fukami-Kobayashi K."/>
            <person name="Toyoda A."/>
            <person name="Sakaki Y."/>
            <person name="Kobayashi M."/>
            <person name="Seki M."/>
            <person name="Shinozaki K."/>
        </authorList>
    </citation>
    <scope>NUCLEOTIDE SEQUENCE [LARGE SCALE MRNA] OF 1-625</scope>
    <source>
        <strain>cv. Columbia</strain>
        <tissue>Rosette leaf</tissue>
    </source>
</reference>
<reference key="4">
    <citation type="submission" date="2002-03" db="EMBL/GenBank/DDBJ databases">
        <title>Full-length cDNA from Arabidopsis thaliana.</title>
        <authorList>
            <person name="Brover V.V."/>
            <person name="Troukhan M.E."/>
            <person name="Alexandrov N.A."/>
            <person name="Lu Y.-P."/>
            <person name="Flavell R.B."/>
            <person name="Feldmann K.A."/>
        </authorList>
    </citation>
    <scope>NUCLEOTIDE SEQUENCE [LARGE SCALE MRNA] OF 529-682</scope>
</reference>
<reference key="5">
    <citation type="journal article" date="2009" name="Plant J.">
        <title>Coordination of cell proliferation and cell expansion mediated by ribosome-related processes in the leaves of Arabidopsis thaliana.</title>
        <authorList>
            <person name="Fujikura U."/>
            <person name="Horiguchi G."/>
            <person name="Ponce M.R."/>
            <person name="Micol J.L."/>
            <person name="Tsukaya H."/>
        </authorList>
    </citation>
    <scope>FUNCTION</scope>
    <scope>DISRUPTION PHENOTYPE</scope>
</reference>
<reference key="6">
    <citation type="journal article" date="2015" name="BMC Plant Biol.">
        <title>Conservation of tRNA and rRNA 5-methylcytosine in the kingdom Plantae.</title>
        <authorList>
            <person name="Burgess A.L."/>
            <person name="David R."/>
            <person name="Searle I.R."/>
        </authorList>
    </citation>
    <scope>FUNCTION</scope>
    <scope>DISRUPTION PHENOTYPE</scope>
    <scope>CATALYTIC ACTIVITY</scope>
    <source>
        <strain>cv. Columbia</strain>
    </source>
</reference>
<reference key="7">
    <citation type="journal article" date="2017" name="BMC Plant Biol.">
        <title>Identification of tRNA nucleoside modification genes critical for stress response and development in rice and Arabidopsis.</title>
        <authorList>
            <person name="Wang Y."/>
            <person name="Pang C."/>
            <person name="Li X."/>
            <person name="Hu Z."/>
            <person name="Lv Z."/>
            <person name="Zheng B."/>
            <person name="Chen P."/>
        </authorList>
    </citation>
    <scope>GENE FAMILY</scope>
    <scope>NOMENCLATURE</scope>
</reference>
<reference key="8">
    <citation type="journal article" date="2017" name="Front. Plant Sci.">
        <title>Two nucleolar proteins, GDP1 and OLI2, function as ribosome biogenesis factors and are preferentially involved in promotion of leaf cell proliferation without strongly affecting leaf adaxial-abaxial patterning in Arabidopsis thaliana.</title>
        <authorList>
            <person name="Kojima K."/>
            <person name="Tamura J."/>
            <person name="Chiba H."/>
            <person name="Fukada K."/>
            <person name="Tsukaya H."/>
            <person name="Horiguchi G."/>
        </authorList>
    </citation>
    <scope>FUNCTION</scope>
    <scope>DISRUPTION PHENOTYPE</scope>
    <scope>TISSUE SPECIFICITY</scope>
    <scope>SUBCELLULAR LOCATION</scope>
    <source>
        <strain>cv. Columbia</strain>
    </source>
</reference>